<gene>
    <name evidence="3" type="primary">ATG5</name>
</gene>
<feature type="chain" id="PRO_0000218996" description="Autophagy protein 5">
    <location>
        <begin position="1"/>
        <end position="275"/>
    </location>
</feature>
<feature type="modified residue" description="N-acetylmethionine" evidence="3">
    <location>
        <position position="1"/>
    </location>
</feature>
<feature type="cross-link" description="Glycyl lysine isopeptide (Lys-Gly) (interchain with G-Cter in ATG12)" evidence="1">
    <location>
        <position position="130"/>
    </location>
</feature>
<protein>
    <recommendedName>
        <fullName evidence="3">Autophagy protein 5</fullName>
    </recommendedName>
</protein>
<keyword id="KW-0007">Acetylation</keyword>
<keyword id="KW-0053">Apoptosis</keyword>
<keyword id="KW-0072">Autophagy</keyword>
<keyword id="KW-0963">Cytoplasm</keyword>
<keyword id="KW-0391">Immunity</keyword>
<keyword id="KW-1017">Isopeptide bond</keyword>
<keyword id="KW-0472">Membrane</keyword>
<keyword id="KW-1185">Reference proteome</keyword>
<keyword id="KW-0832">Ubl conjugation</keyword>
<sequence>MTDDKDVLRDVWFGRIPTCFTLYQDEITEREAEPYYLLLPRVSYLTLVTDKVKKHFQKVMRQEDISEIWFEYEGTPLKWHYPIGLLFDLLASISALPWNITVHFKSFPEKDLLHCPSKDVIEAHFMSCVKEADALKHKSRVISDMQRKDHKQLWMGLQNDRFDQFWTINRKLIEYPPEENGFRYIPFRIYQTTTERPFIQKLFRPVAADGQLHTLGDLLREVCPSAVAPEDGEKKSQVMIHGIEPLLETPLQWLSEHLSYPDNFLHISIVPQPTD</sequence>
<name>ATG5_PIG</name>
<dbReference type="EMBL" id="AM087014">
    <property type="protein sequence ID" value="CAJ31283.1"/>
    <property type="molecule type" value="mRNA"/>
</dbReference>
<dbReference type="RefSeq" id="NP_001032229.1">
    <property type="nucleotide sequence ID" value="NM_001037152.1"/>
</dbReference>
<dbReference type="SMR" id="Q3MQ04"/>
<dbReference type="FunCoup" id="Q3MQ04">
    <property type="interactions" value="1986"/>
</dbReference>
<dbReference type="STRING" id="9823.ENSSSCP00000071330"/>
<dbReference type="PeptideAtlas" id="Q3MQ04"/>
<dbReference type="GeneID" id="100739102"/>
<dbReference type="CTD" id="9474"/>
<dbReference type="InParanoid" id="Q3MQ04"/>
<dbReference type="OrthoDB" id="272162at2759"/>
<dbReference type="Proteomes" id="UP000008227">
    <property type="component" value="Unplaced"/>
</dbReference>
<dbReference type="Proteomes" id="UP000314985">
    <property type="component" value="Unplaced"/>
</dbReference>
<dbReference type="Proteomes" id="UP000694570">
    <property type="component" value="Unplaced"/>
</dbReference>
<dbReference type="Proteomes" id="UP000694571">
    <property type="component" value="Unplaced"/>
</dbReference>
<dbReference type="Proteomes" id="UP000694720">
    <property type="component" value="Unplaced"/>
</dbReference>
<dbReference type="Proteomes" id="UP000694722">
    <property type="component" value="Unplaced"/>
</dbReference>
<dbReference type="Proteomes" id="UP000694723">
    <property type="component" value="Unplaced"/>
</dbReference>
<dbReference type="Proteomes" id="UP000694724">
    <property type="component" value="Unplaced"/>
</dbReference>
<dbReference type="Proteomes" id="UP000694725">
    <property type="component" value="Unplaced"/>
</dbReference>
<dbReference type="Proteomes" id="UP000694726">
    <property type="component" value="Unplaced"/>
</dbReference>
<dbReference type="Proteomes" id="UP000694727">
    <property type="component" value="Unplaced"/>
</dbReference>
<dbReference type="Proteomes" id="UP000694728">
    <property type="component" value="Unplaced"/>
</dbReference>
<dbReference type="GO" id="GO:0034274">
    <property type="term" value="C:Atg12-Atg5-Atg16 complex"/>
    <property type="evidence" value="ECO:0000318"/>
    <property type="project" value="GO_Central"/>
</dbReference>
<dbReference type="GO" id="GO:0005776">
    <property type="term" value="C:autophagosome"/>
    <property type="evidence" value="ECO:0000318"/>
    <property type="project" value="GO_Central"/>
</dbReference>
<dbReference type="GO" id="GO:0005930">
    <property type="term" value="C:axoneme"/>
    <property type="evidence" value="ECO:0000250"/>
    <property type="project" value="UniProtKB"/>
</dbReference>
<dbReference type="GO" id="GO:0061908">
    <property type="term" value="C:phagophore"/>
    <property type="evidence" value="ECO:0000318"/>
    <property type="project" value="GO_Central"/>
</dbReference>
<dbReference type="GO" id="GO:0034045">
    <property type="term" value="C:phagophore assembly site membrane"/>
    <property type="evidence" value="ECO:0000250"/>
    <property type="project" value="UniProtKB"/>
</dbReference>
<dbReference type="GO" id="GO:0035973">
    <property type="term" value="P:aggrephagy"/>
    <property type="evidence" value="ECO:0000318"/>
    <property type="project" value="GO_Central"/>
</dbReference>
<dbReference type="GO" id="GO:0006915">
    <property type="term" value="P:apoptotic process"/>
    <property type="evidence" value="ECO:0007669"/>
    <property type="project" value="UniProtKB-KW"/>
</dbReference>
<dbReference type="GO" id="GO:0000045">
    <property type="term" value="P:autophagosome assembly"/>
    <property type="evidence" value="ECO:0000318"/>
    <property type="project" value="GO_Central"/>
</dbReference>
<dbReference type="GO" id="GO:0006914">
    <property type="term" value="P:autophagy"/>
    <property type="evidence" value="ECO:0000250"/>
    <property type="project" value="UniProtKB"/>
</dbReference>
<dbReference type="GO" id="GO:0006995">
    <property type="term" value="P:cellular response to nitrogen starvation"/>
    <property type="evidence" value="ECO:0000318"/>
    <property type="project" value="GO_Central"/>
</dbReference>
<dbReference type="GO" id="GO:0002376">
    <property type="term" value="P:immune system process"/>
    <property type="evidence" value="ECO:0007669"/>
    <property type="project" value="UniProtKB-KW"/>
</dbReference>
<dbReference type="GO" id="GO:0000423">
    <property type="term" value="P:mitophagy"/>
    <property type="evidence" value="ECO:0000318"/>
    <property type="project" value="GO_Central"/>
</dbReference>
<dbReference type="GO" id="GO:0034727">
    <property type="term" value="P:piecemeal microautophagy of the nucleus"/>
    <property type="evidence" value="ECO:0000318"/>
    <property type="project" value="GO_Central"/>
</dbReference>
<dbReference type="GO" id="GO:1902017">
    <property type="term" value="P:regulation of cilium assembly"/>
    <property type="evidence" value="ECO:0000250"/>
    <property type="project" value="UniProtKB"/>
</dbReference>
<dbReference type="FunFam" id="1.10.246.190:FF:000001">
    <property type="entry name" value="Autophagy related 5"/>
    <property type="match status" value="1"/>
</dbReference>
<dbReference type="FunFam" id="3.10.20.620:FF:000001">
    <property type="entry name" value="Autophagy related 5"/>
    <property type="match status" value="1"/>
</dbReference>
<dbReference type="FunFam" id="3.10.20.90:FF:000100">
    <property type="entry name" value="Autophagy related 5"/>
    <property type="match status" value="1"/>
</dbReference>
<dbReference type="Gene3D" id="3.10.20.620">
    <property type="match status" value="1"/>
</dbReference>
<dbReference type="Gene3D" id="1.10.246.190">
    <property type="entry name" value="Autophagy protein Apg5, helix rich domain"/>
    <property type="match status" value="1"/>
</dbReference>
<dbReference type="Gene3D" id="3.10.20.90">
    <property type="entry name" value="Phosphatidylinositol 3-kinase Catalytic Subunit, Chain A, domain 1"/>
    <property type="match status" value="1"/>
</dbReference>
<dbReference type="InterPro" id="IPR007239">
    <property type="entry name" value="Atg5"/>
</dbReference>
<dbReference type="InterPro" id="IPR048940">
    <property type="entry name" value="ATG5_HBR"/>
</dbReference>
<dbReference type="InterPro" id="IPR042526">
    <property type="entry name" value="Atg5_HR"/>
</dbReference>
<dbReference type="InterPro" id="IPR048939">
    <property type="entry name" value="ATG5_UblA"/>
</dbReference>
<dbReference type="InterPro" id="IPR042527">
    <property type="entry name" value="Atg5_UblA_dom_sf"/>
</dbReference>
<dbReference type="InterPro" id="IPR048318">
    <property type="entry name" value="ATG5_UblB"/>
</dbReference>
<dbReference type="PANTHER" id="PTHR13040">
    <property type="entry name" value="AUTOPHAGY PROTEIN 5"/>
    <property type="match status" value="1"/>
</dbReference>
<dbReference type="PANTHER" id="PTHR13040:SF2">
    <property type="entry name" value="AUTOPHAGY PROTEIN 5"/>
    <property type="match status" value="1"/>
</dbReference>
<dbReference type="Pfam" id="PF20637">
    <property type="entry name" value="ATG5_HBR"/>
    <property type="match status" value="1"/>
</dbReference>
<dbReference type="Pfam" id="PF20638">
    <property type="entry name" value="ATG5_UblA"/>
    <property type="match status" value="1"/>
</dbReference>
<dbReference type="Pfam" id="PF04106">
    <property type="entry name" value="ATG5_UblB"/>
    <property type="match status" value="1"/>
</dbReference>
<reference key="1">
    <citation type="submission" date="2005-09" db="EMBL/GenBank/DDBJ databases">
        <title>Phylogeny and biochemistry of the autophagy protein beclin 1.</title>
        <authorList>
            <person name="Botti J."/>
            <person name="Djavaheri-Mergny M."/>
            <person name="Codogno P."/>
            <person name="Oriol R."/>
        </authorList>
    </citation>
    <scope>NUCLEOTIDE SEQUENCE [MRNA]</scope>
</reference>
<organism>
    <name type="scientific">Sus scrofa</name>
    <name type="common">Pig</name>
    <dbReference type="NCBI Taxonomy" id="9823"/>
    <lineage>
        <taxon>Eukaryota</taxon>
        <taxon>Metazoa</taxon>
        <taxon>Chordata</taxon>
        <taxon>Craniata</taxon>
        <taxon>Vertebrata</taxon>
        <taxon>Euteleostomi</taxon>
        <taxon>Mammalia</taxon>
        <taxon>Eutheria</taxon>
        <taxon>Laurasiatheria</taxon>
        <taxon>Artiodactyla</taxon>
        <taxon>Suina</taxon>
        <taxon>Suidae</taxon>
        <taxon>Sus</taxon>
    </lineage>
</organism>
<proteinExistence type="evidence at transcript level"/>
<accession>Q3MQ04</accession>
<evidence type="ECO:0000250" key="1"/>
<evidence type="ECO:0000250" key="2">
    <source>
        <dbReference type="UniProtKB" id="Q99J83"/>
    </source>
</evidence>
<evidence type="ECO:0000250" key="3">
    <source>
        <dbReference type="UniProtKB" id="Q9H1Y0"/>
    </source>
</evidence>
<evidence type="ECO:0000305" key="4"/>
<comment type="function">
    <text evidence="2 3">Involved in autophagic vesicle formation. Conjugation with ATG12, through a ubiquitin-like conjugating system involving ATG7 as an E1-like activating enzyme and ATG10 as an E2-like conjugating enzyme, is essential for its function. The ATG12-ATG5 conjugate acts as an E3-like enzyme which is required for lipidation of ATG8 family proteins and their association to the vesicle membranes. Involved in mitochondrial quality control after oxidative damage, and in subsequent cellular longevity. Plays a critical role in multiple aspects of lymphocyte development and is essential for both B and T lymphocyte survival and proliferation. Required for optimal processing and presentation of antigens for MHC II. Involved in the maintenance of axon morphology and membrane structures, as well as in normal adipocyte differentiation. Promotes primary ciliogenesis through removal of OFD1 from centriolar satellites and degradation of IFT20 via the autophagic pathway. As part of the ATG8 conjugation system with ATG12 and ATG16L1, required for recruitment of LRRK2 to stressed lysosomes and induction of LRRK2 kinase activity in response to lysosomal stress (By similarity).</text>
</comment>
<comment type="function">
    <text evidence="3">May play an important role in the apoptotic process, possibly within the modified cytoskeleton. Its expression is a relatively late event in the apoptotic process, occurring downstream of caspase activity. Plays a crucial role in IFN-gamma-induced autophagic cell death by interacting with FADD.</text>
</comment>
<comment type="subunit">
    <text evidence="2 3">Forms a conjugate with ATG12. Part of the minor complex composed of 4 sets of ATG12-ATG5 and ATG16L1 (400 kDa); this complex interacts with ATG3 leading to disruption of ATG7 interaction and promotion of ATG8-like proteins lipidation (By similarity). Forms an 800-kDa complex composed of ATG12-ATG5 and ATG16L2 (By similarity). The ATG12-ATG5 conjugate interacts with RAB33A; this interaction is bridged by ATG16L1 and promotes ATG12-ATG5-ATG16L1 complex recruitment to phagophores (By similarity). Interacts with TECPR1; the interaction is direct and does not take place when ATG16L1 is associated with the ATG5-ATG12 conjugate. Interacts with DHX58/RIG-1, IFIH1/MDA5 and MAVS/IPS-1 in monomeric form as well as in ATG12-ATG5 conjugate form. The interaction with MAVS is further enhanced upon vesicular stomatitis virus (VSV) infection. Interacts with ATG3 (By similarity). Interacts with ATG7 and ATG10 (By similarity). Interacts with FADD (By similarity). Interacts with Bassoon/BSN; this interaction is important for the regulation of presynaptic autophagy (By similarity). Interacts with ATG16L2 (By similarity).</text>
</comment>
<comment type="subcellular location">
    <subcellularLocation>
        <location evidence="3">Cytoplasm</location>
    </subcellularLocation>
    <subcellularLocation>
        <location evidence="1">Preautophagosomal structure membrane</location>
        <topology evidence="1">Peripheral membrane protein</topology>
    </subcellularLocation>
    <text evidence="1 3">The conjugate detaches from the membrane immediately before or after autophagosome formation is completed. Also localizes to discrete punctae along the ciliary axoneme and to the base of the ciliary axoneme. Under starved conditions, the ATG12-ATG5-ATG16L1 complex is translocated to phagophores driven by RAB33B (By similarity).</text>
</comment>
<comment type="PTM">
    <text evidence="1">Conjugated to ATG12; which is essential for autophagy, but is not required for association with isolation membrane.</text>
</comment>
<comment type="PTM">
    <text evidence="1">Acetylated by EP300.</text>
</comment>
<comment type="similarity">
    <text evidence="4">Belongs to the ATG5 family.</text>
</comment>